<dbReference type="EC" id="6.3.4.16"/>
<dbReference type="EMBL" id="AC101854">
    <property type="status" value="NOT_ANNOTATED_CDS"/>
    <property type="molecule type" value="Genomic_DNA"/>
</dbReference>
<dbReference type="EMBL" id="AC133187">
    <property type="status" value="NOT_ANNOTATED_CDS"/>
    <property type="molecule type" value="Genomic_DNA"/>
</dbReference>
<dbReference type="EMBL" id="BC067211">
    <property type="protein sequence ID" value="AAH67211.1"/>
    <property type="molecule type" value="mRNA"/>
</dbReference>
<dbReference type="EMBL" id="BC126969">
    <property type="protein sequence ID" value="AAI26970.1"/>
    <property type="molecule type" value="mRNA"/>
</dbReference>
<dbReference type="EMBL" id="AK028683">
    <property type="protein sequence ID" value="BAC26064.1"/>
    <property type="molecule type" value="mRNA"/>
</dbReference>
<dbReference type="CCDS" id="CCDS35605.1"/>
<dbReference type="RefSeq" id="NP_001074278.1">
    <property type="nucleotide sequence ID" value="NM_001080809.2"/>
</dbReference>
<dbReference type="RefSeq" id="XP_011236802.1">
    <property type="nucleotide sequence ID" value="XM_011238500.1"/>
</dbReference>
<dbReference type="RefSeq" id="XP_036020343.1">
    <property type="nucleotide sequence ID" value="XM_036164450.1"/>
</dbReference>
<dbReference type="SMR" id="Q8C196"/>
<dbReference type="BioGRID" id="230602">
    <property type="interactions" value="7"/>
</dbReference>
<dbReference type="FunCoup" id="Q8C196">
    <property type="interactions" value="703"/>
</dbReference>
<dbReference type="IntAct" id="Q8C196">
    <property type="interactions" value="2"/>
</dbReference>
<dbReference type="STRING" id="10090.ENSMUSP00000027144"/>
<dbReference type="GlyCosmos" id="Q8C196">
    <property type="glycosylation" value="3 sites, No reported glycans"/>
</dbReference>
<dbReference type="GlyGen" id="Q8C196">
    <property type="glycosylation" value="11 sites, 2 N-linked glycans (2 sites), 1 O-linked glycan (7 sites)"/>
</dbReference>
<dbReference type="iPTMnet" id="Q8C196"/>
<dbReference type="PhosphoSitePlus" id="Q8C196"/>
<dbReference type="SwissPalm" id="Q8C196"/>
<dbReference type="jPOST" id="Q8C196"/>
<dbReference type="PaxDb" id="10090-ENSMUSP00000027144"/>
<dbReference type="PeptideAtlas" id="Q8C196"/>
<dbReference type="ProteomicsDB" id="285294"/>
<dbReference type="Antibodypedia" id="20025">
    <property type="antibodies" value="513 antibodies from 33 providers"/>
</dbReference>
<dbReference type="Ensembl" id="ENSMUST00000027144.8">
    <property type="protein sequence ID" value="ENSMUSP00000027144.8"/>
    <property type="gene ID" value="ENSMUSG00000025991.9"/>
</dbReference>
<dbReference type="GeneID" id="227231"/>
<dbReference type="KEGG" id="mmu:227231"/>
<dbReference type="UCSC" id="uc007biy.2">
    <property type="organism name" value="mouse"/>
</dbReference>
<dbReference type="AGR" id="MGI:891996"/>
<dbReference type="CTD" id="1373"/>
<dbReference type="MGI" id="MGI:891996">
    <property type="gene designation" value="Cps1"/>
</dbReference>
<dbReference type="VEuPathDB" id="HostDB:ENSMUSG00000025991"/>
<dbReference type="eggNOG" id="KOG0370">
    <property type="taxonomic scope" value="Eukaryota"/>
</dbReference>
<dbReference type="GeneTree" id="ENSGT00940000157192"/>
<dbReference type="HOGENOM" id="CLU_000513_0_2_1"/>
<dbReference type="InParanoid" id="Q8C196"/>
<dbReference type="OMA" id="FPFNKFP"/>
<dbReference type="OrthoDB" id="434at2759"/>
<dbReference type="PhylomeDB" id="Q8C196"/>
<dbReference type="TreeFam" id="TF331485"/>
<dbReference type="BRENDA" id="6.3.4.16">
    <property type="organism ID" value="3474"/>
</dbReference>
<dbReference type="Reactome" id="R-MMU-70635">
    <property type="pathway name" value="Urea cycle"/>
</dbReference>
<dbReference type="SABIO-RK" id="Q8C196"/>
<dbReference type="BioGRID-ORCS" id="227231">
    <property type="hits" value="2 hits in 77 CRISPR screens"/>
</dbReference>
<dbReference type="PRO" id="PR:Q8C196"/>
<dbReference type="Proteomes" id="UP000000589">
    <property type="component" value="Chromosome 1"/>
</dbReference>
<dbReference type="RNAct" id="Q8C196">
    <property type="molecule type" value="protein"/>
</dbReference>
<dbReference type="Bgee" id="ENSMUSG00000025991">
    <property type="expression patterns" value="Expressed in left lobe of liver and 63 other cell types or tissues"/>
</dbReference>
<dbReference type="GO" id="GO:0005743">
    <property type="term" value="C:mitochondrial inner membrane"/>
    <property type="evidence" value="ECO:0007669"/>
    <property type="project" value="Ensembl"/>
</dbReference>
<dbReference type="GO" id="GO:0042645">
    <property type="term" value="C:mitochondrial nucleoid"/>
    <property type="evidence" value="ECO:0007669"/>
    <property type="project" value="Ensembl"/>
</dbReference>
<dbReference type="GO" id="GO:0005739">
    <property type="term" value="C:mitochondrion"/>
    <property type="evidence" value="ECO:0000314"/>
    <property type="project" value="MGI"/>
</dbReference>
<dbReference type="GO" id="GO:0005730">
    <property type="term" value="C:nucleolus"/>
    <property type="evidence" value="ECO:0007669"/>
    <property type="project" value="UniProtKB-SubCell"/>
</dbReference>
<dbReference type="GO" id="GO:0005886">
    <property type="term" value="C:plasma membrane"/>
    <property type="evidence" value="ECO:0007669"/>
    <property type="project" value="UniProtKB-SubCell"/>
</dbReference>
<dbReference type="GO" id="GO:0032991">
    <property type="term" value="C:protein-containing complex"/>
    <property type="evidence" value="ECO:0007669"/>
    <property type="project" value="Ensembl"/>
</dbReference>
<dbReference type="GO" id="GO:0005524">
    <property type="term" value="F:ATP binding"/>
    <property type="evidence" value="ECO:0007669"/>
    <property type="project" value="UniProtKB-KW"/>
</dbReference>
<dbReference type="GO" id="GO:0005509">
    <property type="term" value="F:calcium ion binding"/>
    <property type="evidence" value="ECO:0007669"/>
    <property type="project" value="Ensembl"/>
</dbReference>
<dbReference type="GO" id="GO:0004087">
    <property type="term" value="F:carbamoyl-phosphate synthase (ammonia) activity"/>
    <property type="evidence" value="ECO:0000315"/>
    <property type="project" value="MGI"/>
</dbReference>
<dbReference type="GO" id="GO:0004088">
    <property type="term" value="F:carbamoyl-phosphate synthase (glutamine-hydrolyzing) activity"/>
    <property type="evidence" value="ECO:0007669"/>
    <property type="project" value="InterPro"/>
</dbReference>
<dbReference type="GO" id="GO:0004175">
    <property type="term" value="F:endopeptidase activity"/>
    <property type="evidence" value="ECO:0007669"/>
    <property type="project" value="Ensembl"/>
</dbReference>
<dbReference type="GO" id="GO:0016595">
    <property type="term" value="F:glutamate binding"/>
    <property type="evidence" value="ECO:0007669"/>
    <property type="project" value="Ensembl"/>
</dbReference>
<dbReference type="GO" id="GO:0072341">
    <property type="term" value="F:modified amino acid binding"/>
    <property type="evidence" value="ECO:0007669"/>
    <property type="project" value="Ensembl"/>
</dbReference>
<dbReference type="GO" id="GO:0005543">
    <property type="term" value="F:phospholipid binding"/>
    <property type="evidence" value="ECO:0007669"/>
    <property type="project" value="Ensembl"/>
</dbReference>
<dbReference type="GO" id="GO:0044877">
    <property type="term" value="F:protein-containing complex binding"/>
    <property type="evidence" value="ECO:0007669"/>
    <property type="project" value="Ensembl"/>
</dbReference>
<dbReference type="GO" id="GO:0006207">
    <property type="term" value="P:'de novo' pyrimidine nucleobase biosynthetic process"/>
    <property type="evidence" value="ECO:0007669"/>
    <property type="project" value="InterPro"/>
</dbReference>
<dbReference type="GO" id="GO:0070409">
    <property type="term" value="P:carbamoyl phosphate biosynthetic process"/>
    <property type="evidence" value="ECO:0007669"/>
    <property type="project" value="Ensembl"/>
</dbReference>
<dbReference type="GO" id="GO:0071242">
    <property type="term" value="P:cellular response to ammonium ion"/>
    <property type="evidence" value="ECO:0007669"/>
    <property type="project" value="Ensembl"/>
</dbReference>
<dbReference type="GO" id="GO:0071320">
    <property type="term" value="P:cellular response to cAMP"/>
    <property type="evidence" value="ECO:0007669"/>
    <property type="project" value="Ensembl"/>
</dbReference>
<dbReference type="GO" id="GO:0044344">
    <property type="term" value="P:cellular response to fibroblast growth factor stimulus"/>
    <property type="evidence" value="ECO:0007669"/>
    <property type="project" value="Ensembl"/>
</dbReference>
<dbReference type="GO" id="GO:0071377">
    <property type="term" value="P:cellular response to glucagon stimulus"/>
    <property type="evidence" value="ECO:0007669"/>
    <property type="project" value="Ensembl"/>
</dbReference>
<dbReference type="GO" id="GO:0071400">
    <property type="term" value="P:cellular response to oleic acid"/>
    <property type="evidence" value="ECO:0007669"/>
    <property type="project" value="Ensembl"/>
</dbReference>
<dbReference type="GO" id="GO:0006541">
    <property type="term" value="P:glutamine metabolic process"/>
    <property type="evidence" value="ECO:0007669"/>
    <property type="project" value="InterPro"/>
</dbReference>
<dbReference type="GO" id="GO:0070365">
    <property type="term" value="P:hepatocyte differentiation"/>
    <property type="evidence" value="ECO:0007669"/>
    <property type="project" value="Ensembl"/>
</dbReference>
<dbReference type="GO" id="GO:0050667">
    <property type="term" value="P:homocysteine metabolic process"/>
    <property type="evidence" value="ECO:0007669"/>
    <property type="project" value="Ensembl"/>
</dbReference>
<dbReference type="GO" id="GO:0007494">
    <property type="term" value="P:midgut development"/>
    <property type="evidence" value="ECO:0007669"/>
    <property type="project" value="Ensembl"/>
</dbReference>
<dbReference type="GO" id="GO:0055081">
    <property type="term" value="P:monoatomic anion homeostasis"/>
    <property type="evidence" value="ECO:0007669"/>
    <property type="project" value="Ensembl"/>
</dbReference>
<dbReference type="GO" id="GO:0046209">
    <property type="term" value="P:nitric oxide metabolic process"/>
    <property type="evidence" value="ECO:0007669"/>
    <property type="project" value="Ensembl"/>
</dbReference>
<dbReference type="GO" id="GO:0014075">
    <property type="term" value="P:response to amine"/>
    <property type="evidence" value="ECO:0007669"/>
    <property type="project" value="Ensembl"/>
</dbReference>
<dbReference type="GO" id="GO:0043200">
    <property type="term" value="P:response to amino acid"/>
    <property type="evidence" value="ECO:0007669"/>
    <property type="project" value="Ensembl"/>
</dbReference>
<dbReference type="GO" id="GO:0071548">
    <property type="term" value="P:response to dexamethasone"/>
    <property type="evidence" value="ECO:0007669"/>
    <property type="project" value="Ensembl"/>
</dbReference>
<dbReference type="GO" id="GO:0032094">
    <property type="term" value="P:response to food"/>
    <property type="evidence" value="ECO:0007669"/>
    <property type="project" value="Ensembl"/>
</dbReference>
<dbReference type="GO" id="GO:0060416">
    <property type="term" value="P:response to growth hormone"/>
    <property type="evidence" value="ECO:0007669"/>
    <property type="project" value="Ensembl"/>
</dbReference>
<dbReference type="GO" id="GO:0032496">
    <property type="term" value="P:response to lipopolysaccharide"/>
    <property type="evidence" value="ECO:0007669"/>
    <property type="project" value="Ensembl"/>
</dbReference>
<dbReference type="GO" id="GO:0042594">
    <property type="term" value="P:response to starvation"/>
    <property type="evidence" value="ECO:0007669"/>
    <property type="project" value="Ensembl"/>
</dbReference>
<dbReference type="GO" id="GO:0009636">
    <property type="term" value="P:response to toxic substance"/>
    <property type="evidence" value="ECO:0007669"/>
    <property type="project" value="Ensembl"/>
</dbReference>
<dbReference type="GO" id="GO:0009410">
    <property type="term" value="P:response to xenobiotic stimulus"/>
    <property type="evidence" value="ECO:0007669"/>
    <property type="project" value="Ensembl"/>
</dbReference>
<dbReference type="GO" id="GO:0010043">
    <property type="term" value="P:response to zinc ion"/>
    <property type="evidence" value="ECO:0007669"/>
    <property type="project" value="Ensembl"/>
</dbReference>
<dbReference type="GO" id="GO:0019433">
    <property type="term" value="P:triglyceride catabolic process"/>
    <property type="evidence" value="ECO:0007669"/>
    <property type="project" value="Ensembl"/>
</dbReference>
<dbReference type="GO" id="GO:0000050">
    <property type="term" value="P:urea cycle"/>
    <property type="evidence" value="ECO:0000305"/>
    <property type="project" value="MGI"/>
</dbReference>
<dbReference type="GO" id="GO:0042311">
    <property type="term" value="P:vasodilation"/>
    <property type="evidence" value="ECO:0007669"/>
    <property type="project" value="Ensembl"/>
</dbReference>
<dbReference type="CDD" id="cd01744">
    <property type="entry name" value="GATase1_CPSase"/>
    <property type="match status" value="1"/>
</dbReference>
<dbReference type="CDD" id="cd01423">
    <property type="entry name" value="MGS_CPS_I_III"/>
    <property type="match status" value="1"/>
</dbReference>
<dbReference type="FunFam" id="3.30.470.20:FF:000030">
    <property type="entry name" value="Carbamoyl-phosphate synthase 1, mitochondrial"/>
    <property type="match status" value="1"/>
</dbReference>
<dbReference type="FunFam" id="3.40.50.20:FF:000012">
    <property type="entry name" value="Carbamoyl-phosphate synthase 1, mitochondrial"/>
    <property type="match status" value="1"/>
</dbReference>
<dbReference type="FunFam" id="3.40.50.880:FF:000006">
    <property type="entry name" value="Carbamoyl-phosphate synthase 1, mitochondrial"/>
    <property type="match status" value="1"/>
</dbReference>
<dbReference type="FunFam" id="3.50.30.20:FF:000002">
    <property type="entry name" value="Carbamoyl-phosphate synthase 1, mitochondrial"/>
    <property type="match status" value="1"/>
</dbReference>
<dbReference type="FunFam" id="3.40.50.1380:FF:000010">
    <property type="entry name" value="carbamoyl-phosphate synthase [ammonia], mitochondrial"/>
    <property type="match status" value="1"/>
</dbReference>
<dbReference type="FunFam" id="1.10.1030.10:FF:000001">
    <property type="entry name" value="Carbamoyl-phosphate synthase large chain"/>
    <property type="match status" value="1"/>
</dbReference>
<dbReference type="FunFam" id="3.30.1490.20:FF:000001">
    <property type="entry name" value="Carbamoyl-phosphate synthase large chain"/>
    <property type="match status" value="1"/>
</dbReference>
<dbReference type="FunFam" id="3.30.470.20:FF:000001">
    <property type="entry name" value="Carbamoyl-phosphate synthase large chain"/>
    <property type="match status" value="1"/>
</dbReference>
<dbReference type="FunFam" id="3.40.50.20:FF:000002">
    <property type="entry name" value="Carbamoyl-phosphate synthase large chain"/>
    <property type="match status" value="1"/>
</dbReference>
<dbReference type="Gene3D" id="3.40.50.20">
    <property type="match status" value="2"/>
</dbReference>
<dbReference type="Gene3D" id="3.40.50.880">
    <property type="match status" value="1"/>
</dbReference>
<dbReference type="Gene3D" id="3.30.1490.20">
    <property type="entry name" value="ATP-grasp fold, A domain"/>
    <property type="match status" value="1"/>
</dbReference>
<dbReference type="Gene3D" id="3.30.470.20">
    <property type="entry name" value="ATP-grasp fold, B domain"/>
    <property type="match status" value="2"/>
</dbReference>
<dbReference type="Gene3D" id="3.50.30.20">
    <property type="entry name" value="Carbamoyl-phosphate synthase small subunit, N-terminal domain"/>
    <property type="match status" value="1"/>
</dbReference>
<dbReference type="Gene3D" id="1.10.1030.10">
    <property type="entry name" value="Carbamoyl-phosphate synthetase, large subunit oligomerisation domain"/>
    <property type="match status" value="1"/>
</dbReference>
<dbReference type="Gene3D" id="3.40.50.1380">
    <property type="entry name" value="Methylglyoxal synthase-like domain"/>
    <property type="match status" value="1"/>
</dbReference>
<dbReference type="HAMAP" id="MF_01209">
    <property type="entry name" value="CPSase_S_chain"/>
    <property type="match status" value="1"/>
</dbReference>
<dbReference type="InterPro" id="IPR011761">
    <property type="entry name" value="ATP-grasp"/>
</dbReference>
<dbReference type="InterPro" id="IPR013815">
    <property type="entry name" value="ATP_grasp_subdomain_1"/>
</dbReference>
<dbReference type="InterPro" id="IPR006275">
    <property type="entry name" value="CarbamoylP_synth_lsu"/>
</dbReference>
<dbReference type="InterPro" id="IPR005480">
    <property type="entry name" value="CarbamoylP_synth_lsu_oligo"/>
</dbReference>
<dbReference type="InterPro" id="IPR036897">
    <property type="entry name" value="CarbamoylP_synth_lsu_oligo_sf"/>
</dbReference>
<dbReference type="InterPro" id="IPR006274">
    <property type="entry name" value="CarbamoylP_synth_ssu"/>
</dbReference>
<dbReference type="InterPro" id="IPR002474">
    <property type="entry name" value="CarbamoylP_synth_ssu_N"/>
</dbReference>
<dbReference type="InterPro" id="IPR036480">
    <property type="entry name" value="CarbP_synth_ssu_N_sf"/>
</dbReference>
<dbReference type="InterPro" id="IPR005479">
    <property type="entry name" value="CbamoylP_synth_lsu-like_ATP-bd"/>
</dbReference>
<dbReference type="InterPro" id="IPR005483">
    <property type="entry name" value="CbamoylP_synth_lsu_CPSase_dom"/>
</dbReference>
<dbReference type="InterPro" id="IPR029062">
    <property type="entry name" value="Class_I_gatase-like"/>
</dbReference>
<dbReference type="InterPro" id="IPR035686">
    <property type="entry name" value="CPSase_GATase1"/>
</dbReference>
<dbReference type="InterPro" id="IPR017926">
    <property type="entry name" value="GATASE"/>
</dbReference>
<dbReference type="InterPro" id="IPR011607">
    <property type="entry name" value="MGS-like_dom"/>
</dbReference>
<dbReference type="InterPro" id="IPR036914">
    <property type="entry name" value="MGS-like_dom_sf"/>
</dbReference>
<dbReference type="InterPro" id="IPR016185">
    <property type="entry name" value="PreATP-grasp_dom_sf"/>
</dbReference>
<dbReference type="NCBIfam" id="TIGR01369">
    <property type="entry name" value="CPSaseII_lrg"/>
    <property type="match status" value="1"/>
</dbReference>
<dbReference type="NCBIfam" id="TIGR01368">
    <property type="entry name" value="CPSaseIIsmall"/>
    <property type="match status" value="1"/>
</dbReference>
<dbReference type="NCBIfam" id="NF003671">
    <property type="entry name" value="PRK05294.1"/>
    <property type="match status" value="1"/>
</dbReference>
<dbReference type="NCBIfam" id="NF009455">
    <property type="entry name" value="PRK12815.1"/>
    <property type="match status" value="1"/>
</dbReference>
<dbReference type="NCBIfam" id="NF009475">
    <property type="entry name" value="PRK12838.1"/>
    <property type="match status" value="1"/>
</dbReference>
<dbReference type="PANTHER" id="PTHR11405:SF53">
    <property type="entry name" value="CARBAMOYL-PHOSPHATE SYNTHASE [AMMONIA], MITOCHONDRIAL"/>
    <property type="match status" value="1"/>
</dbReference>
<dbReference type="PANTHER" id="PTHR11405">
    <property type="entry name" value="CARBAMOYLTRANSFERASE FAMILY MEMBER"/>
    <property type="match status" value="1"/>
</dbReference>
<dbReference type="Pfam" id="PF02786">
    <property type="entry name" value="CPSase_L_D2"/>
    <property type="match status" value="2"/>
</dbReference>
<dbReference type="Pfam" id="PF02787">
    <property type="entry name" value="CPSase_L_D3"/>
    <property type="match status" value="1"/>
</dbReference>
<dbReference type="Pfam" id="PF00988">
    <property type="entry name" value="CPSase_sm_chain"/>
    <property type="match status" value="1"/>
</dbReference>
<dbReference type="Pfam" id="PF00117">
    <property type="entry name" value="GATase"/>
    <property type="match status" value="1"/>
</dbReference>
<dbReference type="Pfam" id="PF02142">
    <property type="entry name" value="MGS"/>
    <property type="match status" value="1"/>
</dbReference>
<dbReference type="PRINTS" id="PR00098">
    <property type="entry name" value="CPSASE"/>
</dbReference>
<dbReference type="PRINTS" id="PR00099">
    <property type="entry name" value="CPSGATASE"/>
</dbReference>
<dbReference type="SMART" id="SM01096">
    <property type="entry name" value="CPSase_L_D3"/>
    <property type="match status" value="1"/>
</dbReference>
<dbReference type="SMART" id="SM01097">
    <property type="entry name" value="CPSase_sm_chain"/>
    <property type="match status" value="1"/>
</dbReference>
<dbReference type="SMART" id="SM00851">
    <property type="entry name" value="MGS"/>
    <property type="match status" value="1"/>
</dbReference>
<dbReference type="SUPFAM" id="SSF48108">
    <property type="entry name" value="Carbamoyl phosphate synthetase, large subunit connection domain"/>
    <property type="match status" value="1"/>
</dbReference>
<dbReference type="SUPFAM" id="SSF52021">
    <property type="entry name" value="Carbamoyl phosphate synthetase, small subunit N-terminal domain"/>
    <property type="match status" value="1"/>
</dbReference>
<dbReference type="SUPFAM" id="SSF52317">
    <property type="entry name" value="Class I glutamine amidotransferase-like"/>
    <property type="match status" value="1"/>
</dbReference>
<dbReference type="SUPFAM" id="SSF56059">
    <property type="entry name" value="Glutathione synthetase ATP-binding domain-like"/>
    <property type="match status" value="2"/>
</dbReference>
<dbReference type="SUPFAM" id="SSF52335">
    <property type="entry name" value="Methylglyoxal synthase-like"/>
    <property type="match status" value="1"/>
</dbReference>
<dbReference type="SUPFAM" id="SSF52440">
    <property type="entry name" value="PreATP-grasp domain"/>
    <property type="match status" value="2"/>
</dbReference>
<dbReference type="PROSITE" id="PS50975">
    <property type="entry name" value="ATP_GRASP"/>
    <property type="match status" value="2"/>
</dbReference>
<dbReference type="PROSITE" id="PS00866">
    <property type="entry name" value="CPSASE_1"/>
    <property type="match status" value="2"/>
</dbReference>
<dbReference type="PROSITE" id="PS00867">
    <property type="entry name" value="CPSASE_2"/>
    <property type="match status" value="2"/>
</dbReference>
<dbReference type="PROSITE" id="PS51273">
    <property type="entry name" value="GATASE_TYPE_1"/>
    <property type="match status" value="1"/>
</dbReference>
<dbReference type="PROSITE" id="PS51855">
    <property type="entry name" value="MGS"/>
    <property type="match status" value="1"/>
</dbReference>
<reference key="1">
    <citation type="journal article" date="2009" name="PLoS Biol.">
        <title>Lineage-specific biology revealed by a finished genome assembly of the mouse.</title>
        <authorList>
            <person name="Church D.M."/>
            <person name="Goodstadt L."/>
            <person name="Hillier L.W."/>
            <person name="Zody M.C."/>
            <person name="Goldstein S."/>
            <person name="She X."/>
            <person name="Bult C.J."/>
            <person name="Agarwala R."/>
            <person name="Cherry J.L."/>
            <person name="DiCuccio M."/>
            <person name="Hlavina W."/>
            <person name="Kapustin Y."/>
            <person name="Meric P."/>
            <person name="Maglott D."/>
            <person name="Birtle Z."/>
            <person name="Marques A.C."/>
            <person name="Graves T."/>
            <person name="Zhou S."/>
            <person name="Teague B."/>
            <person name="Potamousis K."/>
            <person name="Churas C."/>
            <person name="Place M."/>
            <person name="Herschleb J."/>
            <person name="Runnheim R."/>
            <person name="Forrest D."/>
            <person name="Amos-Landgraf J."/>
            <person name="Schwartz D.C."/>
            <person name="Cheng Z."/>
            <person name="Lindblad-Toh K."/>
            <person name="Eichler E.E."/>
            <person name="Ponting C.P."/>
        </authorList>
    </citation>
    <scope>NUCLEOTIDE SEQUENCE [LARGE SCALE GENOMIC DNA]</scope>
    <source>
        <strain>C57BL/6J</strain>
    </source>
</reference>
<reference key="2">
    <citation type="journal article" date="2004" name="Genome Res.">
        <title>The status, quality, and expansion of the NIH full-length cDNA project: the Mammalian Gene Collection (MGC).</title>
        <authorList>
            <consortium name="The MGC Project Team"/>
        </authorList>
    </citation>
    <scope>NUCLEOTIDE SEQUENCE [LARGE SCALE MRNA]</scope>
    <source>
        <strain>FVB/N</strain>
        <tissue>Liver</tissue>
    </source>
</reference>
<reference key="3">
    <citation type="submission" date="2005-07" db="UniProtKB">
        <authorList>
            <person name="Bienvenut W.V."/>
        </authorList>
    </citation>
    <scope>PROTEIN SEQUENCE OF 113-167; 183-207; 287-307; 317-328; 403-419; 459-522; 533-624; 631-638; 683-689; 729-740; 794-811; 815-826; 842-850; 857-880; 883-889; 893-905; 1030-1039; 1075-1085; 1090-1100; 1158-1168; 1175-1183; 1233-1259; 1270-1317; 1320-1326; 1349-1356; 1361-1387; 1429-1444 AND 1455-1479</scope>
    <scope>IDENTIFICATION BY MASS SPECTROMETRY</scope>
    <source>
        <strain>C57BL/6J</strain>
        <tissue>Liver</tissue>
    </source>
</reference>
<reference key="4">
    <citation type="journal article" date="2005" name="Science">
        <title>The transcriptional landscape of the mammalian genome.</title>
        <authorList>
            <person name="Carninci P."/>
            <person name="Kasukawa T."/>
            <person name="Katayama S."/>
            <person name="Gough J."/>
            <person name="Frith M.C."/>
            <person name="Maeda N."/>
            <person name="Oyama R."/>
            <person name="Ravasi T."/>
            <person name="Lenhard B."/>
            <person name="Wells C."/>
            <person name="Kodzius R."/>
            <person name="Shimokawa K."/>
            <person name="Bajic V.B."/>
            <person name="Brenner S.E."/>
            <person name="Batalov S."/>
            <person name="Forrest A.R."/>
            <person name="Zavolan M."/>
            <person name="Davis M.J."/>
            <person name="Wilming L.G."/>
            <person name="Aidinis V."/>
            <person name="Allen J.E."/>
            <person name="Ambesi-Impiombato A."/>
            <person name="Apweiler R."/>
            <person name="Aturaliya R.N."/>
            <person name="Bailey T.L."/>
            <person name="Bansal M."/>
            <person name="Baxter L."/>
            <person name="Beisel K.W."/>
            <person name="Bersano T."/>
            <person name="Bono H."/>
            <person name="Chalk A.M."/>
            <person name="Chiu K.P."/>
            <person name="Choudhary V."/>
            <person name="Christoffels A."/>
            <person name="Clutterbuck D.R."/>
            <person name="Crowe M.L."/>
            <person name="Dalla E."/>
            <person name="Dalrymple B.P."/>
            <person name="de Bono B."/>
            <person name="Della Gatta G."/>
            <person name="di Bernardo D."/>
            <person name="Down T."/>
            <person name="Engstrom P."/>
            <person name="Fagiolini M."/>
            <person name="Faulkner G."/>
            <person name="Fletcher C.F."/>
            <person name="Fukushima T."/>
            <person name="Furuno M."/>
            <person name="Futaki S."/>
            <person name="Gariboldi M."/>
            <person name="Georgii-Hemming P."/>
            <person name="Gingeras T.R."/>
            <person name="Gojobori T."/>
            <person name="Green R.E."/>
            <person name="Gustincich S."/>
            <person name="Harbers M."/>
            <person name="Hayashi Y."/>
            <person name="Hensch T.K."/>
            <person name="Hirokawa N."/>
            <person name="Hill D."/>
            <person name="Huminiecki L."/>
            <person name="Iacono M."/>
            <person name="Ikeo K."/>
            <person name="Iwama A."/>
            <person name="Ishikawa T."/>
            <person name="Jakt M."/>
            <person name="Kanapin A."/>
            <person name="Katoh M."/>
            <person name="Kawasawa Y."/>
            <person name="Kelso J."/>
            <person name="Kitamura H."/>
            <person name="Kitano H."/>
            <person name="Kollias G."/>
            <person name="Krishnan S.P."/>
            <person name="Kruger A."/>
            <person name="Kummerfeld S.K."/>
            <person name="Kurochkin I.V."/>
            <person name="Lareau L.F."/>
            <person name="Lazarevic D."/>
            <person name="Lipovich L."/>
            <person name="Liu J."/>
            <person name="Liuni S."/>
            <person name="McWilliam S."/>
            <person name="Madan Babu M."/>
            <person name="Madera M."/>
            <person name="Marchionni L."/>
            <person name="Matsuda H."/>
            <person name="Matsuzawa S."/>
            <person name="Miki H."/>
            <person name="Mignone F."/>
            <person name="Miyake S."/>
            <person name="Morris K."/>
            <person name="Mottagui-Tabar S."/>
            <person name="Mulder N."/>
            <person name="Nakano N."/>
            <person name="Nakauchi H."/>
            <person name="Ng P."/>
            <person name="Nilsson R."/>
            <person name="Nishiguchi S."/>
            <person name="Nishikawa S."/>
            <person name="Nori F."/>
            <person name="Ohara O."/>
            <person name="Okazaki Y."/>
            <person name="Orlando V."/>
            <person name="Pang K.C."/>
            <person name="Pavan W.J."/>
            <person name="Pavesi G."/>
            <person name="Pesole G."/>
            <person name="Petrovsky N."/>
            <person name="Piazza S."/>
            <person name="Reed J."/>
            <person name="Reid J.F."/>
            <person name="Ring B.Z."/>
            <person name="Ringwald M."/>
            <person name="Rost B."/>
            <person name="Ruan Y."/>
            <person name="Salzberg S.L."/>
            <person name="Sandelin A."/>
            <person name="Schneider C."/>
            <person name="Schoenbach C."/>
            <person name="Sekiguchi K."/>
            <person name="Semple C.A."/>
            <person name="Seno S."/>
            <person name="Sessa L."/>
            <person name="Sheng Y."/>
            <person name="Shibata Y."/>
            <person name="Shimada H."/>
            <person name="Shimada K."/>
            <person name="Silva D."/>
            <person name="Sinclair B."/>
            <person name="Sperling S."/>
            <person name="Stupka E."/>
            <person name="Sugiura K."/>
            <person name="Sultana R."/>
            <person name="Takenaka Y."/>
            <person name="Taki K."/>
            <person name="Tammoja K."/>
            <person name="Tan S.L."/>
            <person name="Tang S."/>
            <person name="Taylor M.S."/>
            <person name="Tegner J."/>
            <person name="Teichmann S.A."/>
            <person name="Ueda H.R."/>
            <person name="van Nimwegen E."/>
            <person name="Verardo R."/>
            <person name="Wei C.L."/>
            <person name="Yagi K."/>
            <person name="Yamanishi H."/>
            <person name="Zabarovsky E."/>
            <person name="Zhu S."/>
            <person name="Zimmer A."/>
            <person name="Hide W."/>
            <person name="Bult C."/>
            <person name="Grimmond S.M."/>
            <person name="Teasdale R.D."/>
            <person name="Liu E.T."/>
            <person name="Brusic V."/>
            <person name="Quackenbush J."/>
            <person name="Wahlestedt C."/>
            <person name="Mattick J.S."/>
            <person name="Hume D.A."/>
            <person name="Kai C."/>
            <person name="Sasaki D."/>
            <person name="Tomaru Y."/>
            <person name="Fukuda S."/>
            <person name="Kanamori-Katayama M."/>
            <person name="Suzuki M."/>
            <person name="Aoki J."/>
            <person name="Arakawa T."/>
            <person name="Iida J."/>
            <person name="Imamura K."/>
            <person name="Itoh M."/>
            <person name="Kato T."/>
            <person name="Kawaji H."/>
            <person name="Kawagashira N."/>
            <person name="Kawashima T."/>
            <person name="Kojima M."/>
            <person name="Kondo S."/>
            <person name="Konno H."/>
            <person name="Nakano K."/>
            <person name="Ninomiya N."/>
            <person name="Nishio T."/>
            <person name="Okada M."/>
            <person name="Plessy C."/>
            <person name="Shibata K."/>
            <person name="Shiraki T."/>
            <person name="Suzuki S."/>
            <person name="Tagami M."/>
            <person name="Waki K."/>
            <person name="Watahiki A."/>
            <person name="Okamura-Oho Y."/>
            <person name="Suzuki H."/>
            <person name="Kawai J."/>
            <person name="Hayashizaki Y."/>
        </authorList>
    </citation>
    <scope>NUCLEOTIDE SEQUENCE [LARGE SCALE MRNA] OF 753-1500</scope>
    <source>
        <strain>C57BL/6J</strain>
        <tissue>Skin</tissue>
    </source>
</reference>
<reference key="5">
    <citation type="journal article" date="2007" name="Proc. Natl. Acad. Sci. U.S.A.">
        <title>Large-scale phosphorylation analysis of mouse liver.</title>
        <authorList>
            <person name="Villen J."/>
            <person name="Beausoleil S.A."/>
            <person name="Gerber S.A."/>
            <person name="Gygi S.P."/>
        </authorList>
    </citation>
    <scope>PHOSPHORYLATION [LARGE SCALE ANALYSIS] AT SER-537 AND SER-1079</scope>
    <scope>IDENTIFICATION BY MASS SPECTROMETRY [LARGE SCALE ANALYSIS]</scope>
    <source>
        <tissue>Liver</tissue>
    </source>
</reference>
<reference key="6">
    <citation type="journal article" date="2009" name="Cell">
        <title>SIRT5 Deacetylates carbamoyl phosphate synthetase 1 and regulates the urea cycle.</title>
        <authorList>
            <person name="Nakagawa T."/>
            <person name="Lomb D.J."/>
            <person name="Haigis M.C."/>
            <person name="Guarente L."/>
        </authorList>
    </citation>
    <scope>ACETYLATION AT LYS-1291</scope>
    <scope>DEACETYLATION</scope>
</reference>
<reference key="7">
    <citation type="journal article" date="2010" name="Cell">
        <title>A tissue-specific atlas of mouse protein phosphorylation and expression.</title>
        <authorList>
            <person name="Huttlin E.L."/>
            <person name="Jedrychowski M.P."/>
            <person name="Elias J.E."/>
            <person name="Goswami T."/>
            <person name="Rad R."/>
            <person name="Beausoleil S.A."/>
            <person name="Villen J."/>
            <person name="Haas W."/>
            <person name="Sowa M.E."/>
            <person name="Gygi S.P."/>
        </authorList>
    </citation>
    <scope>PHOSPHORYLATION [LARGE SCALE ANALYSIS] AT SER-148</scope>
    <scope>IDENTIFICATION BY MASS SPECTROMETRY [LARGE SCALE ANALYSIS]</scope>
    <source>
        <tissue>Brain</tissue>
        <tissue>Brown adipose tissue</tissue>
        <tissue>Heart</tissue>
        <tissue>Kidney</tissue>
        <tissue>Liver</tissue>
        <tissue>Lung</tissue>
        <tissue>Pancreas</tissue>
    </source>
</reference>
<reference key="8">
    <citation type="journal article" date="2011" name="Science">
        <title>Sirt5 is a NAD-dependent protein lysine demalonylase and desuccinylase.</title>
        <authorList>
            <person name="Du J."/>
            <person name="Zhou Y."/>
            <person name="Su X."/>
            <person name="Yu J.J."/>
            <person name="Khan S."/>
            <person name="Jiang H."/>
            <person name="Kim J."/>
            <person name="Woo J."/>
            <person name="Kim J.H."/>
            <person name="Choi B.H."/>
            <person name="He B."/>
            <person name="Chen W."/>
            <person name="Zhang S."/>
            <person name="Cerione R.A."/>
            <person name="Auwerx J."/>
            <person name="Hao Q."/>
            <person name="Lin H."/>
        </authorList>
    </citation>
    <scope>ACETYLATION AT LYS-44; LYS-287 AND LYS-1291</scope>
    <scope>SUCCINYLATION AT LYS-44; LYS-287 AND LYS-1291</scope>
    <scope>DESUCCINYLATION BY SIRT5</scope>
</reference>
<reference key="9">
    <citation type="journal article" date="2013" name="Mol. Cell">
        <title>SIRT5-mediated lysine desuccinylation impacts diverse metabolic pathways.</title>
        <authorList>
            <person name="Park J."/>
            <person name="Chen Y."/>
            <person name="Tishkoff D.X."/>
            <person name="Peng C."/>
            <person name="Tan M."/>
            <person name="Dai L."/>
            <person name="Xie Z."/>
            <person name="Zhang Y."/>
            <person name="Zwaans B.M."/>
            <person name="Skinner M.E."/>
            <person name="Lombard D.B."/>
            <person name="Zhao Y."/>
        </authorList>
    </citation>
    <scope>SUCCINYLATION [LARGE SCALE ANALYSIS] AT LYS-44; LYS-55; LYS-57; LYS-119; LYS-157; LYS-207; LYS-214; LYS-287; LYS-307; LYS-400; LYS-402; LYS-412; LYS-458; LYS-522; LYS-527; LYS-553; LYS-560; LYS-575; LYS-603; LYS-612; LYS-751; LYS-757; LYS-793; LYS-831; LYS-840; LYS-875; LYS-889; LYS-892; LYS-915; LYS-919; LYS-1074; LYS-1100; LYS-1149; LYS-1168; LYS-1183; LYS-1232; LYS-1269; LYS-1291; LYS-1356; LYS-1360; LYS-1444; LYS-1471; LYS-1479 AND LYS-1486</scope>
    <scope>IDENTIFICATION BY MASS SPECTROMETRY [LARGE SCALE ANALYSIS]</scope>
    <source>
        <tissue>Liver</tissue>
    </source>
</reference>
<reference key="10">
    <citation type="journal article" date="2013" name="Proc. Natl. Acad. Sci. U.S.A.">
        <title>Label-free quantitative proteomics of the lysine acetylome in mitochondria identifies substrates of SIRT3 in metabolic pathways.</title>
        <authorList>
            <person name="Rardin M.J."/>
            <person name="Newman J.C."/>
            <person name="Held J.M."/>
            <person name="Cusack M.P."/>
            <person name="Sorensen D.J."/>
            <person name="Li B."/>
            <person name="Schilling B."/>
            <person name="Mooney S.D."/>
            <person name="Kahn C.R."/>
            <person name="Verdin E."/>
            <person name="Gibson B.W."/>
        </authorList>
    </citation>
    <scope>ACETYLATION [LARGE SCALE ANALYSIS] AT LYS-44; LYS-55; LYS-57; LYS-119; LYS-157; LYS-171; LYS-182; LYS-197; LYS-207; LYS-210; LYS-214; LYS-219; LYS-228; LYS-279; LYS-280; LYS-287; LYS-307; LYS-310; LYS-412; LYS-453; LYS-458; LYS-522; LYS-527; LYS-532; LYS-553; LYS-560; LYS-575; LYS-603; LYS-612; LYS-630; LYS-751; LYS-757; LYS-772; LYS-793; LYS-811; LYS-831; LYS-840; LYS-841; LYS-856; LYS-875; LYS-889; LYS-892; LYS-908; LYS-915; LYS-919; LYS-935; LYS-1074; LYS-1100; LYS-1168; LYS-1183; LYS-1222; LYS-1232; LYS-1269; LYS-1291; LYS-1356; LYS-1444; LYS-1471; LYS-1479 AND LYS-1486</scope>
    <scope>IDENTIFICATION BY MASS SPECTROMETRY [LARGE SCALE ANALYSIS]</scope>
    <source>
        <tissue>Liver</tissue>
    </source>
</reference>
<reference key="11">
    <citation type="journal article" date="2014" name="Cell Metab.">
        <title>Lysine glutarylation is a protein posttranslational modification regulated by SIRT5.</title>
        <authorList>
            <person name="Tan M."/>
            <person name="Peng C."/>
            <person name="Anderson K.A."/>
            <person name="Chhoy P."/>
            <person name="Xie Z."/>
            <person name="Dai L."/>
            <person name="Park J."/>
            <person name="Chen Y."/>
            <person name="Huang H."/>
            <person name="Zhang Y."/>
            <person name="Ro J."/>
            <person name="Wagner G.R."/>
            <person name="Green M.F."/>
            <person name="Madsen A.S."/>
            <person name="Schmiesing J."/>
            <person name="Peterson B.S."/>
            <person name="Xu G."/>
            <person name="Ilkayeva O.R."/>
            <person name="Muehlbauer M.J."/>
            <person name="Braulke T."/>
            <person name="Muehlhausen C."/>
            <person name="Backos D.S."/>
            <person name="Olsen C.A."/>
            <person name="McGuire P.J."/>
            <person name="Pletcher S.D."/>
            <person name="Lombard D.B."/>
            <person name="Hirschey M.D."/>
            <person name="Zhao Y."/>
        </authorList>
    </citation>
    <scope>FUNCTION</scope>
    <scope>GLUTARYLATION</scope>
</reference>
<reference key="12">
    <citation type="journal article" date="2021" name="Nat. Commun.">
        <title>Plasmodium sporozoite phospholipid scramblase interacts with mammalian carbamoyl-phosphate synthetase 1 to infect hepatocytes.</title>
        <authorList>
            <person name="Cha S.J."/>
            <person name="Kim M.S."/>
            <person name="Na C.H."/>
            <person name="Jacobs-Lorena M."/>
        </authorList>
    </citation>
    <scope>INTERACTION WITH P.BERGHEI PLSCR (MICROBIAL INFECTION)</scope>
    <scope>SUBCELLULAR LOCATION</scope>
    <scope>TISSUE SPECIFICITY</scope>
</reference>
<accession>Q8C196</accession>
<accession>A0JNU4</accession>
<accession>Q6NX75</accession>
<keyword id="KW-0007">Acetylation</keyword>
<keyword id="KW-0021">Allosteric enzyme</keyword>
<keyword id="KW-0067">ATP-binding</keyword>
<keyword id="KW-1003">Cell membrane</keyword>
<keyword id="KW-0903">Direct protein sequencing</keyword>
<keyword id="KW-0325">Glycoprotein</keyword>
<keyword id="KW-0436">Ligase</keyword>
<keyword id="KW-0472">Membrane</keyword>
<keyword id="KW-0496">Mitochondrion</keyword>
<keyword id="KW-0547">Nucleotide-binding</keyword>
<keyword id="KW-0539">Nucleus</keyword>
<keyword id="KW-0597">Phosphoprotein</keyword>
<keyword id="KW-1185">Reference proteome</keyword>
<keyword id="KW-0677">Repeat</keyword>
<keyword id="KW-0809">Transit peptide</keyword>
<keyword id="KW-0835">Urea cycle</keyword>
<gene>
    <name type="primary">Cps1</name>
</gene>
<organism>
    <name type="scientific">Mus musculus</name>
    <name type="common">Mouse</name>
    <dbReference type="NCBI Taxonomy" id="10090"/>
    <lineage>
        <taxon>Eukaryota</taxon>
        <taxon>Metazoa</taxon>
        <taxon>Chordata</taxon>
        <taxon>Craniata</taxon>
        <taxon>Vertebrata</taxon>
        <taxon>Euteleostomi</taxon>
        <taxon>Mammalia</taxon>
        <taxon>Eutheria</taxon>
        <taxon>Euarchontoglires</taxon>
        <taxon>Glires</taxon>
        <taxon>Rodentia</taxon>
        <taxon>Myomorpha</taxon>
        <taxon>Muroidea</taxon>
        <taxon>Muridae</taxon>
        <taxon>Murinae</taxon>
        <taxon>Mus</taxon>
        <taxon>Mus</taxon>
    </lineage>
</organism>
<evidence type="ECO:0000250" key="1"/>
<evidence type="ECO:0000250" key="2">
    <source>
        <dbReference type="UniProtKB" id="P07756"/>
    </source>
</evidence>
<evidence type="ECO:0000250" key="3">
    <source>
        <dbReference type="UniProtKB" id="P31327"/>
    </source>
</evidence>
<evidence type="ECO:0000255" key="4">
    <source>
        <dbReference type="PROSITE-ProRule" id="PRU01202"/>
    </source>
</evidence>
<evidence type="ECO:0000269" key="5">
    <source>
    </source>
</evidence>
<evidence type="ECO:0000269" key="6">
    <source>
    </source>
</evidence>
<evidence type="ECO:0000269" key="7">
    <source>
    </source>
</evidence>
<evidence type="ECO:0000269" key="8">
    <source>
    </source>
</evidence>
<evidence type="ECO:0000305" key="9"/>
<evidence type="ECO:0000305" key="10">
    <source>
    </source>
</evidence>
<evidence type="ECO:0000305" key="11">
    <source>
    </source>
</evidence>
<evidence type="ECO:0007744" key="12">
    <source>
    </source>
</evidence>
<evidence type="ECO:0007744" key="13">
    <source>
    </source>
</evidence>
<evidence type="ECO:0007744" key="14">
    <source>
    </source>
</evidence>
<evidence type="ECO:0007744" key="15">
    <source>
    </source>
</evidence>
<sequence>MTRILTACKVVKTLKSGFGFANVTTKRQWDFSRPGIRLLSVKAKTAHIVLEDGTKMKGYSFGHPSSVAGEVVFNTGLGGYPEALTDPAYKGQILTMANPIIGNGGAPDTTARDELGLNKYMESDGIKVAGLLVLNYSNDYNHWLATKSLGQWLQEEKVPAIYGVDTRMLTKIIRDKGTMLGKIEFEGQSVDFVDPNKQNLIAEVSTKDVKVFGKGNPTKVVAVDCGIKNNVIRLLVKRGAEVHLVPWNHDFTQMEYDGLLIAGGPGNPALAQPLIQNVKKILESDRKEPLFGISTGNIITGLAAGAKSYKMSMANRGQNQPVLNITNRQAFITAQNHGYALDNTLPAGWKPLFVNVNDQTNEGIMHESKPFFAVQFHPEVSPGPTDTEYLFDSFFSLIKKGKGTTITSVLPKPALVASRVEVSKVLILGSGGLSIGQAGEFDYSGSQAVKAMKEENVKTVLMNPNIASVQTNEVGLKQADAVYFLPITPQFVTEVIKAERPDGLILGMGGQTALNCGVELFKRGVLKEYGVKVLGTSVESIMATEDRQLFSDKLNEINEKIAPSFAVESMEDALKAADTIGYPVMIRSAYALGGLGSGICPNKETLIDLGTKAFAMTNQILVERSVTGWKEIEYEVVRDADDNCVTVCNMENVDAMGVHTGDSVVVAPAQTLSNAEFQMLRRTSVNVVRHLGIVGECNIQFALHPTSMEYCIIEVNARLSRSSALASKATGYPLAFIAAKIALGIPLPEIKNVVSGKTSACFEPSLDYMVTKIPRWDLDRFHGTSSRIGSSMKSVGEVMAIGRTFEESFQKALRMCHPSVDGFTPRLPMNKEWPANLDLKKELSEPSSTRIYAIAKALENNMSLDEIVRLTSIDKWFLYKMRDILNMDKTLKGLNSDSVTEETLRKAKEIGFSDKQISKCLGLTEAQTRELRLKKNIHPWVKQIDTLAAEYPSVTNYLYVTYNGQEHDIKFDEHGIMVLGCGPYHIGSSVEFDWCAVSSIRTLRQLGKKTVVVNCNPETVSTDFDECDKLYFEELSLERILDIYHQEACNGCIISVGGQIPNNLAVPLYKNGVKIMGTSPLQIDRAEDRSIFSAVLDELKVAQAPWKAVNTLNEALEFANSVGYPCLLRPSYVLSGSAMNVVFSEDEMKRFLEEATRVSQEHPVVLTKFVEGAREVEMDAVGKEGRVISHAISEHVEDAGVHSGDATLMLPTQTISQGAIEKVKDATRKIAKAFAISGPFNVQFLVKGNDVLVIECNLRASRSFPFVSKTLGVDFIDVATKVMIGESIDEKRLPTLEQPIIPSDYVAIKAPMFSWPRLRDADPILRCEMASTGEVACFGEGIHTAFLKAMLSTGFKIPQKGILIGIQQSFRPRFLGVAEQLHNEGFKLFATEATSDWLNANNVPATPVAWPSQEGQNPSLSSIRKLIRDGSIDLVINLPNNNTKFVHDNYVIRRTAVDSGIALLTNFQVTKLFAEAVQKSRTVDSKSLFHYRQYSAGKAA</sequence>
<protein>
    <recommendedName>
        <fullName>Carbamoyl-phosphate synthase [ammonia], mitochondrial</fullName>
        <ecNumber>6.3.4.16</ecNumber>
    </recommendedName>
    <alternativeName>
        <fullName>Carbamoyl-phosphate synthetase I</fullName>
        <shortName>CPSase I</shortName>
    </alternativeName>
</protein>
<name>CPSM_MOUSE</name>
<proteinExistence type="evidence at protein level"/>
<feature type="transit peptide" description="Mitochondrion" evidence="1">
    <location>
        <begin position="1"/>
        <end position="38"/>
    </location>
</feature>
<feature type="chain" id="PRO_0000029898" description="Carbamoyl-phosphate synthase [ammonia], mitochondrial" evidence="1">
    <location>
        <begin position="39"/>
        <end position="1500"/>
    </location>
</feature>
<feature type="domain" description="Glutamine amidotransferase type-1">
    <location>
        <begin position="219"/>
        <end position="404"/>
    </location>
</feature>
<feature type="domain" description="ATP-grasp 1">
    <location>
        <begin position="551"/>
        <end position="743"/>
    </location>
</feature>
<feature type="domain" description="ATP-grasp 2">
    <location>
        <begin position="1093"/>
        <end position="1284"/>
    </location>
</feature>
<feature type="domain" description="MGS-like" evidence="4">
    <location>
        <begin position="1355"/>
        <end position="1500"/>
    </location>
</feature>
<feature type="region of interest" description="Anthranilate phosphoribosyltransferase homolog">
    <location>
        <begin position="39"/>
        <end position="218"/>
    </location>
</feature>
<feature type="binding site" evidence="1">
    <location>
        <position position="1391"/>
    </location>
    <ligand>
        <name>N-acetyl-L-glutamate</name>
        <dbReference type="ChEBI" id="CHEBI:44337"/>
        <note>allosteric activator</note>
    </ligand>
</feature>
<feature type="binding site" evidence="1">
    <location>
        <position position="1394"/>
    </location>
    <ligand>
        <name>N-acetyl-L-glutamate</name>
        <dbReference type="ChEBI" id="CHEBI:44337"/>
        <note>allosteric activator</note>
    </ligand>
</feature>
<feature type="binding site" evidence="1">
    <location>
        <position position="1410"/>
    </location>
    <ligand>
        <name>N-acetyl-L-glutamate</name>
        <dbReference type="ChEBI" id="CHEBI:44337"/>
        <note>allosteric activator</note>
    </ligand>
</feature>
<feature type="binding site" evidence="1">
    <location>
        <position position="1437"/>
    </location>
    <ligand>
        <name>N-acetyl-L-glutamate</name>
        <dbReference type="ChEBI" id="CHEBI:44337"/>
        <note>allosteric activator</note>
    </ligand>
</feature>
<feature type="binding site" evidence="1">
    <location>
        <position position="1440"/>
    </location>
    <ligand>
        <name>N-acetyl-L-glutamate</name>
        <dbReference type="ChEBI" id="CHEBI:44337"/>
        <note>allosteric activator</note>
    </ligand>
</feature>
<feature type="binding site" evidence="1">
    <location>
        <position position="1449"/>
    </location>
    <ligand>
        <name>N-acetyl-L-glutamate</name>
        <dbReference type="ChEBI" id="CHEBI:44337"/>
        <note>allosteric activator</note>
    </ligand>
</feature>
<feature type="modified residue" description="N6-acetyllysine; alternate" evidence="6 14">
    <location>
        <position position="44"/>
    </location>
</feature>
<feature type="modified residue" description="N6-succinyllysine; alternate" evidence="6 15">
    <location>
        <position position="44"/>
    </location>
</feature>
<feature type="modified residue" description="N6-acetyllysine; alternate" evidence="14">
    <location>
        <position position="55"/>
    </location>
</feature>
<feature type="modified residue" description="N6-glutaryllysine; alternate" evidence="3">
    <location>
        <position position="55"/>
    </location>
</feature>
<feature type="modified residue" description="N6-succinyllysine; alternate" evidence="15">
    <location>
        <position position="55"/>
    </location>
</feature>
<feature type="modified residue" description="N6-acetyllysine; alternate" evidence="14">
    <location>
        <position position="57"/>
    </location>
</feature>
<feature type="modified residue" description="N6-succinyllysine; alternate" evidence="15">
    <location>
        <position position="57"/>
    </location>
</feature>
<feature type="modified residue" description="N6-acetyllysine; alternate" evidence="14">
    <location>
        <position position="119"/>
    </location>
</feature>
<feature type="modified residue" description="N6-succinyllysine; alternate" evidence="15">
    <location>
        <position position="119"/>
    </location>
</feature>
<feature type="modified residue" description="Phosphoserine" evidence="13">
    <location>
        <position position="148"/>
    </location>
</feature>
<feature type="modified residue" description="N6-acetyllysine; alternate" evidence="14">
    <location>
        <position position="157"/>
    </location>
</feature>
<feature type="modified residue" description="N6-succinyllysine; alternate" evidence="15">
    <location>
        <position position="157"/>
    </location>
</feature>
<feature type="modified residue" description="N6-acetyllysine; alternate" evidence="14">
    <location>
        <position position="171"/>
    </location>
</feature>
<feature type="modified residue" description="N6-glutaryllysine; alternate" evidence="3">
    <location>
        <position position="171"/>
    </location>
</feature>
<feature type="modified residue" description="N6-glutaryllysine" evidence="3">
    <location>
        <position position="176"/>
    </location>
</feature>
<feature type="modified residue" description="N6-acetyllysine" evidence="14">
    <location>
        <position position="182"/>
    </location>
</feature>
<feature type="modified residue" description="Phosphoserine" evidence="2">
    <location>
        <position position="189"/>
    </location>
</feature>
<feature type="modified residue" description="N6-acetyllysine" evidence="14">
    <location>
        <position position="197"/>
    </location>
</feature>
<feature type="modified residue" description="N6-acetyllysine; alternate" evidence="14">
    <location>
        <position position="207"/>
    </location>
</feature>
<feature type="modified residue" description="N6-glutaryllysine; alternate" evidence="3">
    <location>
        <position position="207"/>
    </location>
</feature>
<feature type="modified residue" description="N6-succinyllysine; alternate" evidence="15">
    <location>
        <position position="207"/>
    </location>
</feature>
<feature type="modified residue" description="N6-acetyllysine; alternate" evidence="14">
    <location>
        <position position="210"/>
    </location>
</feature>
<feature type="modified residue" description="N6-glutaryllysine; alternate" evidence="3">
    <location>
        <position position="210"/>
    </location>
</feature>
<feature type="modified residue" description="N6-acetyllysine; alternate" evidence="14">
    <location>
        <position position="214"/>
    </location>
</feature>
<feature type="modified residue" description="N6-glutaryllysine; alternate" evidence="3">
    <location>
        <position position="214"/>
    </location>
</feature>
<feature type="modified residue" description="N6-succinyllysine; alternate" evidence="15">
    <location>
        <position position="214"/>
    </location>
</feature>
<feature type="modified residue" description="N6-acetyllysine; alternate" evidence="14">
    <location>
        <position position="219"/>
    </location>
</feature>
<feature type="modified residue" description="N6-glutaryllysine; alternate" evidence="3">
    <location>
        <position position="219"/>
    </location>
</feature>
<feature type="modified residue" description="N6-acetyllysine; alternate" evidence="14">
    <location>
        <position position="228"/>
    </location>
</feature>
<feature type="modified residue" description="N6-glutaryllysine; alternate" evidence="3">
    <location>
        <position position="228"/>
    </location>
</feature>
<feature type="modified residue" description="N6-glutaryllysine" evidence="3">
    <location>
        <position position="237"/>
    </location>
</feature>
<feature type="modified residue" description="N6-acetyllysine" evidence="14">
    <location>
        <position position="279"/>
    </location>
</feature>
<feature type="modified residue" description="N6-acetyllysine; alternate" evidence="14">
    <location>
        <position position="280"/>
    </location>
</feature>
<feature type="modified residue" description="N6-glutaryllysine; alternate" evidence="3">
    <location>
        <position position="280"/>
    </location>
</feature>
<feature type="modified residue" description="N6-acetyllysine; alternate" evidence="6 14">
    <location>
        <position position="287"/>
    </location>
</feature>
<feature type="modified residue" description="N6-succinyllysine; alternate" evidence="6 15">
    <location>
        <position position="287"/>
    </location>
</feature>
<feature type="modified residue" description="N6-acetyllysine; alternate" evidence="14">
    <location>
        <position position="307"/>
    </location>
</feature>
<feature type="modified residue" description="N6-glutaryllysine; alternate" evidence="3">
    <location>
        <position position="307"/>
    </location>
</feature>
<feature type="modified residue" description="N6-succinyllysine; alternate" evidence="15">
    <location>
        <position position="307"/>
    </location>
</feature>
<feature type="modified residue" description="N6-acetyllysine; alternate" evidence="14">
    <location>
        <position position="310"/>
    </location>
</feature>
<feature type="modified residue" description="N6-glutaryllysine; alternate" evidence="3">
    <location>
        <position position="310"/>
    </location>
</feature>
<feature type="modified residue" description="N6-succinyllysine" evidence="15">
    <location>
        <position position="400"/>
    </location>
</feature>
<feature type="modified residue" description="N6-glutaryllysine; alternate" evidence="3">
    <location>
        <position position="402"/>
    </location>
</feature>
<feature type="modified residue" description="N6-succinyllysine; alternate" evidence="15">
    <location>
        <position position="402"/>
    </location>
</feature>
<feature type="modified residue" description="N6-acetyllysine; alternate" evidence="14">
    <location>
        <position position="412"/>
    </location>
</feature>
<feature type="modified residue" description="N6-glutaryllysine; alternate" evidence="3">
    <location>
        <position position="412"/>
    </location>
</feature>
<feature type="modified residue" description="N6-succinyllysine; alternate" evidence="15">
    <location>
        <position position="412"/>
    </location>
</feature>
<feature type="modified residue" description="N6-acetyllysine; alternate" evidence="14">
    <location>
        <position position="453"/>
    </location>
</feature>
<feature type="modified residue" description="N6-glutaryllysine; alternate" evidence="3">
    <location>
        <position position="453"/>
    </location>
</feature>
<feature type="modified residue" description="N6-acetyllysine; alternate" evidence="14">
    <location>
        <position position="458"/>
    </location>
</feature>
<feature type="modified residue" description="N6-glutaryllysine; alternate" evidence="3">
    <location>
        <position position="458"/>
    </location>
</feature>
<feature type="modified residue" description="N6-succinyllysine; alternate" evidence="15">
    <location>
        <position position="458"/>
    </location>
</feature>
<feature type="modified residue" description="N6-acetyllysine; alternate" evidence="14">
    <location>
        <position position="522"/>
    </location>
</feature>
<feature type="modified residue" description="N6-succinyllysine; alternate" evidence="15">
    <location>
        <position position="522"/>
    </location>
</feature>
<feature type="modified residue" description="N6-acetyllysine; alternate" evidence="14">
    <location>
        <position position="527"/>
    </location>
</feature>
<feature type="modified residue" description="N6-glutaryllysine; alternate" evidence="3">
    <location>
        <position position="527"/>
    </location>
</feature>
<feature type="modified residue" description="N6-succinyllysine; alternate" evidence="15">
    <location>
        <position position="527"/>
    </location>
</feature>
<feature type="modified residue" description="N6-acetyllysine; alternate" evidence="14">
    <location>
        <position position="532"/>
    </location>
</feature>
<feature type="modified residue" description="N6-glutaryllysine; alternate" evidence="3">
    <location>
        <position position="532"/>
    </location>
</feature>
<feature type="modified residue" description="Phosphoserine; alternate" evidence="12">
    <location>
        <position position="537"/>
    </location>
</feature>
<feature type="modified residue" description="Phosphoserine" evidence="2">
    <location>
        <position position="540"/>
    </location>
</feature>
<feature type="modified residue" description="N6-acetyllysine; alternate" evidence="14">
    <location>
        <position position="553"/>
    </location>
</feature>
<feature type="modified residue" description="N6-glutaryllysine; alternate" evidence="3">
    <location>
        <position position="553"/>
    </location>
</feature>
<feature type="modified residue" description="N6-succinyllysine; alternate" evidence="15">
    <location>
        <position position="553"/>
    </location>
</feature>
<feature type="modified residue" description="N6-acetyllysine; alternate" evidence="14">
    <location>
        <position position="560"/>
    </location>
</feature>
<feature type="modified residue" description="N6-succinyllysine; alternate" evidence="15">
    <location>
        <position position="560"/>
    </location>
</feature>
<feature type="modified residue" description="Phosphoserine" evidence="3">
    <location>
        <position position="569"/>
    </location>
</feature>
<feature type="modified residue" description="N6-acetyllysine; alternate" evidence="14">
    <location>
        <position position="575"/>
    </location>
</feature>
<feature type="modified residue" description="N6-succinyllysine; alternate" evidence="15">
    <location>
        <position position="575"/>
    </location>
</feature>
<feature type="modified residue" description="N6-acetyllysine; alternate" evidence="14">
    <location>
        <position position="603"/>
    </location>
</feature>
<feature type="modified residue" description="N6-succinyllysine; alternate" evidence="15">
    <location>
        <position position="603"/>
    </location>
</feature>
<feature type="modified residue" description="N6-acetyllysine; alternate" evidence="14">
    <location>
        <position position="612"/>
    </location>
</feature>
<feature type="modified residue" description="N6-succinyllysine; alternate" evidence="15">
    <location>
        <position position="612"/>
    </location>
</feature>
<feature type="modified residue" description="N6-acetyllysine" evidence="14">
    <location>
        <position position="630"/>
    </location>
</feature>
<feature type="modified residue" description="N6-glutaryllysine" evidence="3">
    <location>
        <position position="728"/>
    </location>
</feature>
<feature type="modified residue" description="N6-acetyllysine; alternate" evidence="14">
    <location>
        <position position="751"/>
    </location>
</feature>
<feature type="modified residue" description="N6-succinyllysine; alternate" evidence="15">
    <location>
        <position position="751"/>
    </location>
</feature>
<feature type="modified residue" description="N6-acetyllysine; alternate" evidence="14">
    <location>
        <position position="757"/>
    </location>
</feature>
<feature type="modified residue" description="N6-glutaryllysine; alternate" evidence="3">
    <location>
        <position position="757"/>
    </location>
</feature>
<feature type="modified residue" description="N6-succinyllysine; alternate" evidence="15">
    <location>
        <position position="757"/>
    </location>
</feature>
<feature type="modified residue" description="N6-acetyllysine; alternate" evidence="14">
    <location>
        <position position="772"/>
    </location>
</feature>
<feature type="modified residue" description="N6-glutaryllysine; alternate" evidence="3">
    <location>
        <position position="772"/>
    </location>
</feature>
<feature type="modified residue" description="N6-acetyllysine; alternate" evidence="14">
    <location>
        <position position="793"/>
    </location>
</feature>
<feature type="modified residue" description="N6-glutaryllysine; alternate" evidence="3">
    <location>
        <position position="793"/>
    </location>
</feature>
<feature type="modified residue" description="N6-succinyllysine; alternate" evidence="15">
    <location>
        <position position="793"/>
    </location>
</feature>
<feature type="modified residue" description="N6-acetyllysine; alternate" evidence="14">
    <location>
        <position position="811"/>
    </location>
</feature>
<feature type="modified residue" description="N6-glutaryllysine; alternate" evidence="3">
    <location>
        <position position="811"/>
    </location>
</feature>
<feature type="modified residue" description="N6-acetyllysine; alternate" evidence="14">
    <location>
        <position position="831"/>
    </location>
</feature>
<feature type="modified residue" description="N6-succinyllysine; alternate" evidence="15">
    <location>
        <position position="831"/>
    </location>
</feature>
<feature type="modified residue" description="N6-acetyllysine; alternate" evidence="14">
    <location>
        <position position="840"/>
    </location>
</feature>
<feature type="modified residue" description="N6-succinyllysine; alternate" evidence="15">
    <location>
        <position position="840"/>
    </location>
</feature>
<feature type="modified residue" description="N6-acetyllysine; alternate" evidence="14">
    <location>
        <position position="841"/>
    </location>
</feature>
<feature type="modified residue" description="N6-glutaryllysine; alternate" evidence="3">
    <location>
        <position position="841"/>
    </location>
</feature>
<feature type="modified residue" description="N6-acetyllysine; alternate" evidence="14">
    <location>
        <position position="856"/>
    </location>
</feature>
<feature type="modified residue" description="N6-glutaryllysine; alternate" evidence="3">
    <location>
        <position position="856"/>
    </location>
</feature>
<feature type="modified residue" description="N6-acetyllysine; alternate" evidence="14">
    <location>
        <position position="875"/>
    </location>
</feature>
<feature type="modified residue" description="N6-glutaryllysine; alternate" evidence="3">
    <location>
        <position position="875"/>
    </location>
</feature>
<feature type="modified residue" description="N6-succinyllysine; alternate" evidence="15">
    <location>
        <position position="875"/>
    </location>
</feature>
<feature type="modified residue" description="N6-acetyllysine; alternate" evidence="14">
    <location>
        <position position="889"/>
    </location>
</feature>
<feature type="modified residue" description="N6-glutaryllysine; alternate" evidence="3">
    <location>
        <position position="889"/>
    </location>
</feature>
<feature type="modified residue" description="N6-succinyllysine; alternate" evidence="15">
    <location>
        <position position="889"/>
    </location>
</feature>
<feature type="modified residue" description="N6-acetyllysine; alternate" evidence="14">
    <location>
        <position position="892"/>
    </location>
</feature>
<feature type="modified residue" description="N6-glutaryllysine; alternate" evidence="3">
    <location>
        <position position="892"/>
    </location>
</feature>
<feature type="modified residue" description="N6-succinyllysine; alternate" evidence="15">
    <location>
        <position position="892"/>
    </location>
</feature>
<feature type="modified residue" description="Phosphoserine" evidence="2">
    <location>
        <position position="896"/>
    </location>
</feature>
<feature type="modified residue" description="Phosphoserine" evidence="2">
    <location>
        <position position="898"/>
    </location>
</feature>
<feature type="modified residue" description="N6-acetyllysine; alternate" evidence="14">
    <location>
        <position position="908"/>
    </location>
</feature>
<feature type="modified residue" description="N6-glutaryllysine; alternate" evidence="3">
    <location>
        <position position="908"/>
    </location>
</feature>
<feature type="modified residue" description="N6-acetyllysine; alternate" evidence="14">
    <location>
        <position position="915"/>
    </location>
</feature>
<feature type="modified residue" description="N6-glutaryllysine; alternate" evidence="3">
    <location>
        <position position="915"/>
    </location>
</feature>
<feature type="modified residue" description="N6-succinyllysine; alternate" evidence="15">
    <location>
        <position position="915"/>
    </location>
</feature>
<feature type="modified residue" description="N6-acetyllysine; alternate" evidence="14">
    <location>
        <position position="919"/>
    </location>
</feature>
<feature type="modified residue" description="N6-glutaryllysine; alternate" evidence="3">
    <location>
        <position position="919"/>
    </location>
</feature>
<feature type="modified residue" description="N6-succinyllysine; alternate" evidence="15">
    <location>
        <position position="919"/>
    </location>
</feature>
<feature type="modified residue" description="N6-acetyllysine" evidence="14">
    <location>
        <position position="935"/>
    </location>
</feature>
<feature type="modified residue" description="Phosphoserine" evidence="3">
    <location>
        <position position="1036"/>
    </location>
</feature>
<feature type="modified residue" description="N6-acetyllysine; alternate" evidence="14">
    <location>
        <position position="1074"/>
    </location>
</feature>
<feature type="modified residue" description="N6-glutaryllysine; alternate" evidence="3">
    <location>
        <position position="1074"/>
    </location>
</feature>
<feature type="modified residue" description="N6-succinyllysine; alternate" evidence="15">
    <location>
        <position position="1074"/>
    </location>
</feature>
<feature type="modified residue" description="Phosphoserine" evidence="12">
    <location>
        <position position="1079"/>
    </location>
</feature>
<feature type="modified residue" description="Phosphoserine" evidence="2">
    <location>
        <position position="1090"/>
    </location>
</feature>
<feature type="modified residue" description="Phosphoserine" evidence="2">
    <location>
        <position position="1093"/>
    </location>
</feature>
<feature type="modified residue" description="N6-acetyllysine; alternate" evidence="14">
    <location>
        <position position="1100"/>
    </location>
</feature>
<feature type="modified residue" description="N6-succinyllysine; alternate" evidence="15">
    <location>
        <position position="1100"/>
    </location>
</feature>
<feature type="modified residue" description="N6-succinyllysine" evidence="15">
    <location>
        <position position="1149"/>
    </location>
</feature>
<feature type="modified residue" description="N6-acetyllysine; alternate" evidence="14">
    <location>
        <position position="1168"/>
    </location>
</feature>
<feature type="modified residue" description="N6-glutaryllysine; alternate" evidence="3">
    <location>
        <position position="1168"/>
    </location>
</feature>
<feature type="modified residue" description="N6-succinyllysine; alternate" evidence="15">
    <location>
        <position position="1168"/>
    </location>
</feature>
<feature type="modified residue" description="N6-acetyllysine; alternate" evidence="14">
    <location>
        <position position="1183"/>
    </location>
</feature>
<feature type="modified residue" description="N6-glutaryllysine; alternate" evidence="3">
    <location>
        <position position="1183"/>
    </location>
</feature>
<feature type="modified residue" description="N6-succinyllysine; alternate" evidence="15">
    <location>
        <position position="1183"/>
    </location>
</feature>
<feature type="modified residue" description="Phosphoserine" evidence="3">
    <location>
        <position position="1203"/>
    </location>
</feature>
<feature type="modified residue" description="N6-acetyllysine" evidence="14">
    <location>
        <position position="1222"/>
    </location>
</feature>
<feature type="modified residue" description="N6-glutaryllysine" evidence="3">
    <location>
        <position position="1224"/>
    </location>
</feature>
<feature type="modified residue" description="N6-acetyllysine; alternate" evidence="14">
    <location>
        <position position="1232"/>
    </location>
</feature>
<feature type="modified residue" description="N6-succinyllysine; alternate" evidence="15">
    <location>
        <position position="1232"/>
    </location>
</feature>
<feature type="modified residue" description="N6-acetyllysine; alternate" evidence="14">
    <location>
        <position position="1269"/>
    </location>
</feature>
<feature type="modified residue" description="N6-succinyllysine; alternate" evidence="15">
    <location>
        <position position="1269"/>
    </location>
</feature>
<feature type="modified residue" description="N6-acetyllysine; alternate" evidence="5 6 14">
    <location>
        <position position="1291"/>
    </location>
</feature>
<feature type="modified residue" description="N6-succinyllysine; alternate" evidence="6 15">
    <location>
        <position position="1291"/>
    </location>
</feature>
<feature type="modified residue" description="N6-acetyllysine; alternate" evidence="14">
    <location>
        <position position="1356"/>
    </location>
</feature>
<feature type="modified residue" description="N6-glutaryllysine; alternate" evidence="3">
    <location>
        <position position="1356"/>
    </location>
</feature>
<feature type="modified residue" description="N6-succinyllysine; alternate" evidence="15">
    <location>
        <position position="1356"/>
    </location>
</feature>
<feature type="modified residue" description="N6-glutaryllysine; alternate" evidence="3">
    <location>
        <position position="1360"/>
    </location>
</feature>
<feature type="modified residue" description="N6-succinyllysine; alternate" evidence="15">
    <location>
        <position position="1360"/>
    </location>
</feature>
<feature type="modified residue" description="Phosphoserine" evidence="3">
    <location>
        <position position="1419"/>
    </location>
</feature>
<feature type="modified residue" description="Phosphoserine" evidence="3">
    <location>
        <position position="1431"/>
    </location>
</feature>
<feature type="modified residue" description="N6-acetyllysine; alternate" evidence="14">
    <location>
        <position position="1444"/>
    </location>
</feature>
<feature type="modified residue" description="N6-succinyllysine; alternate" evidence="15">
    <location>
        <position position="1444"/>
    </location>
</feature>
<feature type="modified residue" description="N6-acetyllysine; alternate" evidence="14">
    <location>
        <position position="1471"/>
    </location>
</feature>
<feature type="modified residue" description="N6-succinyllysine; alternate" evidence="15">
    <location>
        <position position="1471"/>
    </location>
</feature>
<feature type="modified residue" description="N6-acetyllysine; alternate" evidence="14">
    <location>
        <position position="1479"/>
    </location>
</feature>
<feature type="modified residue" description="N6-glutaryllysine; alternate" evidence="3">
    <location>
        <position position="1479"/>
    </location>
</feature>
<feature type="modified residue" description="N6-succinyllysine; alternate" evidence="15">
    <location>
        <position position="1479"/>
    </location>
</feature>
<feature type="modified residue" description="N6-acetyllysine; alternate" evidence="14">
    <location>
        <position position="1486"/>
    </location>
</feature>
<feature type="modified residue" description="N6-glutaryllysine; alternate" evidence="3">
    <location>
        <position position="1486"/>
    </location>
</feature>
<feature type="modified residue" description="N6-succinyllysine; alternate" evidence="15">
    <location>
        <position position="1486"/>
    </location>
</feature>
<feature type="glycosylation site" description="O-linked (GlcNAc) serine; alternate" evidence="1">
    <location>
        <position position="537"/>
    </location>
</feature>
<feature type="glycosylation site" description="O-linked (GlcNAc) serine" evidence="1">
    <location>
        <position position="1331"/>
    </location>
</feature>
<feature type="glycosylation site" description="O-linked (GlcNAc) threonine" evidence="1">
    <location>
        <position position="1332"/>
    </location>
</feature>
<feature type="sequence conflict" description="In Ref. 2; AAH67211." evidence="9" ref="2">
    <original>LRLK</original>
    <variation>HASE</variation>
    <location>
        <begin position="931"/>
        <end position="934"/>
    </location>
</feature>
<comment type="function">
    <text evidence="7">Involved in the urea cycle of ureotelic animals where the enzyme plays an important role in removing excess ammonia from the cell.</text>
</comment>
<comment type="catalytic activity">
    <reaction evidence="2">
        <text>hydrogencarbonate + NH4(+) + 2 ATP = carbamoyl phosphate + 2 ADP + phosphate + 2 H(+)</text>
        <dbReference type="Rhea" id="RHEA:18029"/>
        <dbReference type="ChEBI" id="CHEBI:15378"/>
        <dbReference type="ChEBI" id="CHEBI:17544"/>
        <dbReference type="ChEBI" id="CHEBI:28938"/>
        <dbReference type="ChEBI" id="CHEBI:30616"/>
        <dbReference type="ChEBI" id="CHEBI:43474"/>
        <dbReference type="ChEBI" id="CHEBI:58228"/>
        <dbReference type="ChEBI" id="CHEBI:456216"/>
        <dbReference type="EC" id="6.3.4.16"/>
    </reaction>
</comment>
<comment type="activity regulation">
    <text evidence="1">Requires N-acetyl-L-glutamate (NAG) as an allosteric activator.</text>
</comment>
<comment type="subunit">
    <text evidence="3">Can form homooligomers (monomers as predominant form and dimers).</text>
</comment>
<comment type="subunit">
    <text evidence="8">(Microbial infection) Interacts with P.berghei (ANKA strain) phospholipid scramblase PLSCR; the interaction is involved in the interaction between parasite sporozoites and host hepatocytes.</text>
</comment>
<comment type="interaction">
    <interactant intactId="EBI-2348828">
        <id>Q8C196</id>
    </interactant>
    <interactant intactId="EBI-2348809">
        <id>Q8K2C6</id>
        <label>Sirt5</label>
    </interactant>
    <organismsDiffer>false</organismsDiffer>
    <experiments>2</experiments>
</comment>
<comment type="subcellular location">
    <subcellularLocation>
        <location evidence="3">Mitochondrion</location>
    </subcellularLocation>
    <subcellularLocation>
        <location evidence="3">Nucleus</location>
        <location evidence="3">Nucleolus</location>
    </subcellularLocation>
    <subcellularLocation>
        <location evidence="8">Cell membrane</location>
        <topology evidence="9">Peripheral membrane protein</topology>
        <orientation evidence="8">Extracellular side</orientation>
    </subcellularLocation>
    <text evidence="8">Localizes to the cell surface of hepatocytes.</text>
</comment>
<comment type="tissue specificity">
    <text evidence="8">Expressed in hepatocytes (at protein level).</text>
</comment>
<comment type="domain">
    <text evidence="1">The type-1 glutamine amidotransferase domain is defective.</text>
</comment>
<comment type="PTM">
    <text evidence="3">Undergoes proteolytic cleavage in the C-terminal region corresponding to the loss of approximately 12 AA residues from the C-terminus.</text>
</comment>
<comment type="PTM">
    <text evidence="5 6">Acetylation of Lys-287, Lys-603, Lys-841 and Lys-1291 is observed in liver mitochondria from fasted mice but not from fed mice.</text>
</comment>
<comment type="PTM">
    <text evidence="6">Succinylated at Lys-44, Lys-287 and Lys-1291. Desuccinylated at Lys-1291 by SIRT5, leading to activation.</text>
</comment>
<comment type="PTM">
    <text evidence="3 7">Glutarylated. Glutarylation levels increase during fasting. Deglutarylated by SIRT5 at Lys-55, Lys-219, Lys-412, Lys-889, Lys-892, Lys-915, Lys-1360 and Lys-1486, leading to activation.</text>
</comment>
<comment type="caution">
    <text evidence="10 11">Was initially reported to be deacetylated by Sirt5 (PubMed:19410549). However, it was later shown that Sirt5 has poor deacetylase activity and mediates desuccinylation of Cps1 instead (PubMed:22076378).</text>
</comment>